<comment type="function">
    <text evidence="1">NAD-binding protein involved in the addition of a carboxymethylaminomethyl (cmnm) group at the wobble position (U34) of certain tRNAs, forming tRNA-cmnm(5)s(2)U34.</text>
</comment>
<comment type="cofactor">
    <cofactor evidence="1">
        <name>FAD</name>
        <dbReference type="ChEBI" id="CHEBI:57692"/>
    </cofactor>
</comment>
<comment type="subunit">
    <text evidence="1">Homodimer. Heterotetramer of two MnmE and two MnmG subunits.</text>
</comment>
<comment type="subcellular location">
    <subcellularLocation>
        <location evidence="1">Cytoplasm</location>
    </subcellularLocation>
</comment>
<comment type="similarity">
    <text evidence="1">Belongs to the MnmG family.</text>
</comment>
<keyword id="KW-0963">Cytoplasm</keyword>
<keyword id="KW-0274">FAD</keyword>
<keyword id="KW-0285">Flavoprotein</keyword>
<keyword id="KW-0520">NAD</keyword>
<keyword id="KW-0819">tRNA processing</keyword>
<proteinExistence type="inferred from homology"/>
<protein>
    <recommendedName>
        <fullName evidence="1">tRNA uridine 5-carboxymethylaminomethyl modification enzyme MnmG</fullName>
    </recommendedName>
    <alternativeName>
        <fullName evidence="1">Glucose-inhibited division protein A</fullName>
    </alternativeName>
</protein>
<dbReference type="EMBL" id="AE017262">
    <property type="protein sequence ID" value="AAT05565.1"/>
    <property type="molecule type" value="Genomic_DNA"/>
</dbReference>
<dbReference type="RefSeq" id="WP_010959108.1">
    <property type="nucleotide sequence ID" value="NC_002973.6"/>
</dbReference>
<dbReference type="SMR" id="Q71VV1"/>
<dbReference type="KEGG" id="lmf:LMOf2365_2801"/>
<dbReference type="HOGENOM" id="CLU_007831_2_2_9"/>
<dbReference type="GO" id="GO:0005829">
    <property type="term" value="C:cytosol"/>
    <property type="evidence" value="ECO:0007669"/>
    <property type="project" value="TreeGrafter"/>
</dbReference>
<dbReference type="GO" id="GO:0050660">
    <property type="term" value="F:flavin adenine dinucleotide binding"/>
    <property type="evidence" value="ECO:0007669"/>
    <property type="project" value="UniProtKB-UniRule"/>
</dbReference>
<dbReference type="GO" id="GO:0030488">
    <property type="term" value="P:tRNA methylation"/>
    <property type="evidence" value="ECO:0007669"/>
    <property type="project" value="TreeGrafter"/>
</dbReference>
<dbReference type="GO" id="GO:0002098">
    <property type="term" value="P:tRNA wobble uridine modification"/>
    <property type="evidence" value="ECO:0007669"/>
    <property type="project" value="InterPro"/>
</dbReference>
<dbReference type="FunFam" id="1.10.10.1800:FF:000001">
    <property type="entry name" value="tRNA uridine 5-carboxymethylaminomethyl modification enzyme MnmG"/>
    <property type="match status" value="1"/>
</dbReference>
<dbReference type="FunFam" id="1.10.150.570:FF:000001">
    <property type="entry name" value="tRNA uridine 5-carboxymethylaminomethyl modification enzyme MnmG"/>
    <property type="match status" value="1"/>
</dbReference>
<dbReference type="FunFam" id="3.50.50.60:FF:000002">
    <property type="entry name" value="tRNA uridine 5-carboxymethylaminomethyl modification enzyme MnmG"/>
    <property type="match status" value="1"/>
</dbReference>
<dbReference type="FunFam" id="3.50.50.60:FF:000063">
    <property type="entry name" value="tRNA uridine 5-carboxymethylaminomethyl modification enzyme MnmG"/>
    <property type="match status" value="1"/>
</dbReference>
<dbReference type="Gene3D" id="3.50.50.60">
    <property type="entry name" value="FAD/NAD(P)-binding domain"/>
    <property type="match status" value="2"/>
</dbReference>
<dbReference type="Gene3D" id="1.10.150.570">
    <property type="entry name" value="GidA associated domain, C-terminal subdomain"/>
    <property type="match status" value="1"/>
</dbReference>
<dbReference type="Gene3D" id="1.10.10.1800">
    <property type="entry name" value="tRNA uridine 5-carboxymethylaminomethyl modification enzyme MnmG/GidA"/>
    <property type="match status" value="1"/>
</dbReference>
<dbReference type="HAMAP" id="MF_00129">
    <property type="entry name" value="MnmG_GidA"/>
    <property type="match status" value="1"/>
</dbReference>
<dbReference type="InterPro" id="IPR036188">
    <property type="entry name" value="FAD/NAD-bd_sf"/>
</dbReference>
<dbReference type="InterPro" id="IPR049312">
    <property type="entry name" value="GIDA_C_N"/>
</dbReference>
<dbReference type="InterPro" id="IPR004416">
    <property type="entry name" value="MnmG"/>
</dbReference>
<dbReference type="InterPro" id="IPR002218">
    <property type="entry name" value="MnmG-rel"/>
</dbReference>
<dbReference type="InterPro" id="IPR020595">
    <property type="entry name" value="MnmG-rel_CS"/>
</dbReference>
<dbReference type="InterPro" id="IPR026904">
    <property type="entry name" value="MnmG_C"/>
</dbReference>
<dbReference type="InterPro" id="IPR047001">
    <property type="entry name" value="MnmG_C_subdom"/>
</dbReference>
<dbReference type="InterPro" id="IPR044920">
    <property type="entry name" value="MnmG_C_subdom_sf"/>
</dbReference>
<dbReference type="InterPro" id="IPR040131">
    <property type="entry name" value="MnmG_N"/>
</dbReference>
<dbReference type="NCBIfam" id="TIGR00136">
    <property type="entry name" value="mnmG_gidA"/>
    <property type="match status" value="1"/>
</dbReference>
<dbReference type="PANTHER" id="PTHR11806">
    <property type="entry name" value="GLUCOSE INHIBITED DIVISION PROTEIN A"/>
    <property type="match status" value="1"/>
</dbReference>
<dbReference type="PANTHER" id="PTHR11806:SF0">
    <property type="entry name" value="PROTEIN MTO1 HOMOLOG, MITOCHONDRIAL"/>
    <property type="match status" value="1"/>
</dbReference>
<dbReference type="Pfam" id="PF01134">
    <property type="entry name" value="GIDA"/>
    <property type="match status" value="1"/>
</dbReference>
<dbReference type="Pfam" id="PF21680">
    <property type="entry name" value="GIDA_C_1st"/>
    <property type="match status" value="1"/>
</dbReference>
<dbReference type="Pfam" id="PF13932">
    <property type="entry name" value="SAM_GIDA_C"/>
    <property type="match status" value="1"/>
</dbReference>
<dbReference type="PRINTS" id="PR00411">
    <property type="entry name" value="PNDRDTASEI"/>
</dbReference>
<dbReference type="SMART" id="SM01228">
    <property type="entry name" value="GIDA_assoc_3"/>
    <property type="match status" value="1"/>
</dbReference>
<dbReference type="SUPFAM" id="SSF51905">
    <property type="entry name" value="FAD/NAD(P)-binding domain"/>
    <property type="match status" value="1"/>
</dbReference>
<dbReference type="PROSITE" id="PS01280">
    <property type="entry name" value="GIDA_1"/>
    <property type="match status" value="1"/>
</dbReference>
<dbReference type="PROSITE" id="PS01281">
    <property type="entry name" value="GIDA_2"/>
    <property type="match status" value="1"/>
</dbReference>
<reference key="1">
    <citation type="journal article" date="2004" name="Nucleic Acids Res.">
        <title>Whole genome comparisons of serotype 4b and 1/2a strains of the food-borne pathogen Listeria monocytogenes reveal new insights into the core genome components of this species.</title>
        <authorList>
            <person name="Nelson K.E."/>
            <person name="Fouts D.E."/>
            <person name="Mongodin E.F."/>
            <person name="Ravel J."/>
            <person name="DeBoy R.T."/>
            <person name="Kolonay J.F."/>
            <person name="Rasko D.A."/>
            <person name="Angiuoli S.V."/>
            <person name="Gill S.R."/>
            <person name="Paulsen I.T."/>
            <person name="Peterson J.D."/>
            <person name="White O."/>
            <person name="Nelson W.C."/>
            <person name="Nierman W.C."/>
            <person name="Beanan M.J."/>
            <person name="Brinkac L.M."/>
            <person name="Daugherty S.C."/>
            <person name="Dodson R.J."/>
            <person name="Durkin A.S."/>
            <person name="Madupu R."/>
            <person name="Haft D.H."/>
            <person name="Selengut J."/>
            <person name="Van Aken S.E."/>
            <person name="Khouri H.M."/>
            <person name="Fedorova N."/>
            <person name="Forberger H.A."/>
            <person name="Tran B."/>
            <person name="Kathariou S."/>
            <person name="Wonderling L.D."/>
            <person name="Uhlich G.A."/>
            <person name="Bayles D.O."/>
            <person name="Luchansky J.B."/>
            <person name="Fraser C.M."/>
        </authorList>
    </citation>
    <scope>NUCLEOTIDE SEQUENCE [LARGE SCALE GENOMIC DNA]</scope>
    <source>
        <strain>F2365</strain>
    </source>
</reference>
<evidence type="ECO:0000255" key="1">
    <source>
        <dbReference type="HAMAP-Rule" id="MF_00129"/>
    </source>
</evidence>
<evidence type="ECO:0000256" key="2">
    <source>
        <dbReference type="SAM" id="MobiDB-lite"/>
    </source>
</evidence>
<sequence>MQTYNAGTFDVIVVGAGHAGVEAGLASGRMGAKTLMLTINLDMVAFMPCNPSVGGPAKGVVVREIDALGGEMGRNTDKTYIQMRMLNTGKGPAVRALRAQADKWDYQHEMKHTIEKEENITLRQGLVDRLVIEDGVCKGVITNSGAIYYAKTVVITTGTFSRGEIIVGELRYSSGPNNQQPSVKLSEHLEELGFELRRFKTGTPPRVKSSTIDYSKTEEQPGDDHPRAFSFDTVEMLLDQLPCWLTYTNETTHEIIQANLHRSPMFTATKKGTGARYCPSIEDKIVRFSDKPRHQIFLEPEGKNTEEVYVQGLSTSLPEEVQREMLRTIPGLENVEMMRVGYAIEYDAVMPDQLWPSLETKLVEGLFTAGQINGTSGYEEAAGQGLMAGINAARKVFAKEPVILGRDQAYIGVLIDDLVTKGTEEPYRLLTSRAEYRLLLRHDNADLRLTEIGHEIGLISDERYERFLAKQSAIEAEKERLQKTRIKPTAEVQAMLKEIGSGELKDGILAADLLRRPEITYDKIAQIVSRETFVTDEIAEQVEIQIKYEGYIQKSNLQVEKMKRMEDKKIPENIDYDAISGLATEALEKLKKIEPLSIAQASRISGVNPADISILLVYIEQGKIAKRDKEKA</sequence>
<name>MNMG_LISMF</name>
<gene>
    <name evidence="1" type="primary">mnmG</name>
    <name evidence="1" type="synonym">gidA</name>
    <name type="ordered locus">LMOf2365_2801</name>
</gene>
<feature type="chain" id="PRO_0000117127" description="tRNA uridine 5-carboxymethylaminomethyl modification enzyme MnmG">
    <location>
        <begin position="1"/>
        <end position="632"/>
    </location>
</feature>
<feature type="region of interest" description="Disordered" evidence="2">
    <location>
        <begin position="203"/>
        <end position="226"/>
    </location>
</feature>
<feature type="compositionally biased region" description="Basic and acidic residues" evidence="2">
    <location>
        <begin position="215"/>
        <end position="226"/>
    </location>
</feature>
<feature type="binding site" evidence="1">
    <location>
        <begin position="15"/>
        <end position="20"/>
    </location>
    <ligand>
        <name>FAD</name>
        <dbReference type="ChEBI" id="CHEBI:57692"/>
    </ligand>
</feature>
<feature type="binding site" evidence="1">
    <location>
        <position position="127"/>
    </location>
    <ligand>
        <name>FAD</name>
        <dbReference type="ChEBI" id="CHEBI:57692"/>
    </ligand>
</feature>
<feature type="binding site" evidence="1">
    <location>
        <position position="182"/>
    </location>
    <ligand>
        <name>FAD</name>
        <dbReference type="ChEBI" id="CHEBI:57692"/>
    </ligand>
</feature>
<feature type="binding site" evidence="1">
    <location>
        <begin position="274"/>
        <end position="288"/>
    </location>
    <ligand>
        <name>NAD(+)</name>
        <dbReference type="ChEBI" id="CHEBI:57540"/>
    </ligand>
</feature>
<feature type="binding site" evidence="1">
    <location>
        <position position="371"/>
    </location>
    <ligand>
        <name>FAD</name>
        <dbReference type="ChEBI" id="CHEBI:57692"/>
    </ligand>
</feature>
<organism>
    <name type="scientific">Listeria monocytogenes serotype 4b (strain F2365)</name>
    <dbReference type="NCBI Taxonomy" id="265669"/>
    <lineage>
        <taxon>Bacteria</taxon>
        <taxon>Bacillati</taxon>
        <taxon>Bacillota</taxon>
        <taxon>Bacilli</taxon>
        <taxon>Bacillales</taxon>
        <taxon>Listeriaceae</taxon>
        <taxon>Listeria</taxon>
    </lineage>
</organism>
<accession>Q71VV1</accession>